<reference key="1">
    <citation type="journal article" date="1996" name="Cell">
        <title>Isolation of angiopoietin-1, a ligand for the TIE2 receptor, by secretion-trap expression cloning.</title>
        <authorList>
            <person name="Davis S."/>
            <person name="Aldrich T.H."/>
            <person name="Jones P.F."/>
            <person name="Acheson A."/>
            <person name="Compton D.L."/>
            <person name="Jain V."/>
            <person name="Ryan T.E."/>
            <person name="Bruno J."/>
            <person name="Radziejewski C."/>
            <person name="Maisonpierre P.C."/>
            <person name="Yancopoulos G.D."/>
        </authorList>
    </citation>
    <scope>NUCLEOTIDE SEQUENCE [MRNA]</scope>
    <scope>SUBCELLULAR LOCATION</scope>
</reference>
<reference key="2">
    <citation type="journal article" date="2004" name="Genome Res.">
        <title>The status, quality, and expansion of the NIH full-length cDNA project: the Mammalian Gene Collection (MGC).</title>
        <authorList>
            <consortium name="The MGC Project Team"/>
        </authorList>
    </citation>
    <scope>NUCLEOTIDE SEQUENCE [LARGE SCALE MRNA]</scope>
    <source>
        <strain>C57BL/6J</strain>
        <tissue>Embryo</tissue>
    </source>
</reference>
<reference key="3">
    <citation type="journal article" date="1996" name="Cell">
        <title>Requisite role of angiopoietin-1, a ligand for the TIE2 receptor, during embryonic angiogenesis.</title>
        <authorList>
            <person name="Suri C."/>
            <person name="Jones P.F."/>
            <person name="Patan S."/>
            <person name="Bartunkova S."/>
            <person name="Maisonpierre P.C."/>
            <person name="Davis S."/>
            <person name="Sato T.N."/>
            <person name="Yancopoulos G.D."/>
        </authorList>
    </citation>
    <scope>DISRUPTION PHENOTYPE</scope>
</reference>
<reference key="4">
    <citation type="journal article" date="2009" name="Mol. Cell. Proteomics">
        <title>Large scale localization of protein phosphorylation by use of electron capture dissociation mass spectrometry.</title>
        <authorList>
            <person name="Sweet S.M."/>
            <person name="Bailey C.M."/>
            <person name="Cunningham D.L."/>
            <person name="Heath J.K."/>
            <person name="Cooper H.J."/>
        </authorList>
    </citation>
    <scope>IDENTIFICATION BY MASS SPECTROMETRY [LARGE SCALE ANALYSIS]</scope>
    <source>
        <tissue>Embryonic fibroblast</tissue>
    </source>
</reference>
<reference key="5">
    <citation type="journal article" date="2017" name="Circ. Res.">
        <title>Polydom Is an Extracellular Matrix Protein Involved in Lymphatic Vessel Remodeling.</title>
        <authorList>
            <person name="Morooka N."/>
            <person name="Futaki S."/>
            <person name="Sato-Nishiuchi R."/>
            <person name="Nishino M."/>
            <person name="Totani Y."/>
            <person name="Shimono C."/>
            <person name="Nakano I."/>
            <person name="Nakajima H."/>
            <person name="Mochizuki N."/>
            <person name="Sekiguchi K."/>
        </authorList>
    </citation>
    <scope>INTERACTION WITH SVEP1</scope>
</reference>
<proteinExistence type="evidence at protein level"/>
<sequence length="498" mass="57519">MTVFLSFAFFAAILTHIGCSNQRRNPENGGRRYNRIQHGQCAYTFILPEHDGNCRESATEQYNTNALQRDAPHVEPDFSSQKLQHLEHVMENYTQWLQKLENYIVENMKSEMAQIQQNAVQNHTATMLEIGTSLLSQTAEQTRKLTDVETQVLNQTSRLEIQLLENSLSTYKLEKQLLQQTNEILKIHEKNSLLEHKILEMEGKHKEELDTLKEEKENLQGLVSRQTFIIQELEKQLSRATNNNSILQKQQLELMDTVHNLISLCTKEGVLLKGGKREEEKPFRDCADVYQAGFNKSGIYTIYFNNMPEPKKVFCNMDVNGGGWTVIQHREDGSLDFQRGWKEYKMGFGNPSGEYWLGNEFIFAITSQRQYMLRIELMDWEGNRAYSQYDRFHIGNEKQNYRLYLKGHTGTAGKQSSLILHGADFSTKDADNDNCMCKCALMLTGGWWFDACGPSNLNGMFYTAGQNHGKLNGIKWHYFKGPSYSLRSTTMMIRPLDF</sequence>
<comment type="function">
    <text evidence="1">Binds and activates TEK/TIE2 receptor by inducing its dimerization and tyrosine phosphorylation. Plays an important role in the regulation of angiogenesis, endothelial cell survival, proliferation, migration, adhesion and cell spreading, reorganization of the actin cytoskeleton, but also maintenance of vascular quiescence. Required for normal angiogenesis and heart development during embryogenesis. After birth, activates or inhibits angiogenesis, depending on the context. Inhibits angiogenesis and promotes vascular stability in quiescent vessels, where endothelial cells have tight contacts. In quiescent vessels, ANGPT1 oligomers recruit TEK to cell-cell contacts, forming complexes with TEK molecules from adjoining cells, and this leads to preferential activation of phosphatidylinositol 3-kinase and the AKT1 signaling cascades. In migrating endothelial cells that lack cell-cell adhesions, ANGT1 recruits TEK to contacts with the extracellular matrix, leading to the formation of focal adhesion complexes, activation of PTK2/FAK and of the downstream kinases MAPK1/ERK2 and MAPK3/ERK1, and ultimately to the stimulation of sprouting angiogenesis. Mediates blood vessel maturation/stability. Implicated in endothelial developmental processes later and distinct from that of VEGF. Appears to play a crucial role in mediating reciprocal interactions between the endothelium and surrounding matrix and mesenchyme (By similarity).</text>
</comment>
<comment type="subunit">
    <text evidence="2 5">Homooligomer (By similarity). Interacts with TEK/TIE2 (By similarity). Interacts with SVEP1/polydom (PubMed:28179430). Interacts with THBD; this interaction significantly inhibits the generation of activated PC and TAFIa/CPB2 by the thrombin/thrombomodulin complex (By similarity).</text>
</comment>
<comment type="subcellular location">
    <subcellularLocation>
        <location evidence="6">Secreted</location>
    </subcellularLocation>
</comment>
<comment type="developmental stage">
    <text>Early in development, at 9 dpc to 11 dpc, it is found most prominently in the heart myocardium surrounding the endocardium. Later, it becomes more widely distributed, most often in the mesenchyme surrounding developing vessels, in close association with endothelial cells.</text>
</comment>
<comment type="disruption phenotype">
    <text evidence="7">Embryonically lethal. Embryos die at about 12.5 dpc, due to important developmental defects of the endocardium and myocardium, plus generalized defects in vascular development.</text>
</comment>
<name>ANGP1_MOUSE</name>
<dbReference type="EMBL" id="U83509">
    <property type="protein sequence ID" value="AAB50558.1"/>
    <property type="molecule type" value="mRNA"/>
</dbReference>
<dbReference type="EMBL" id="BC067410">
    <property type="protein sequence ID" value="AAH67410.1"/>
    <property type="molecule type" value="mRNA"/>
</dbReference>
<dbReference type="CCDS" id="CCDS27450.1"/>
<dbReference type="RefSeq" id="NP_033770.2">
    <property type="nucleotide sequence ID" value="NM_009640.4"/>
</dbReference>
<dbReference type="SMR" id="O08538"/>
<dbReference type="DIP" id="DIP-6051N"/>
<dbReference type="FunCoup" id="O08538">
    <property type="interactions" value="835"/>
</dbReference>
<dbReference type="IntAct" id="O08538">
    <property type="interactions" value="1"/>
</dbReference>
<dbReference type="STRING" id="10090.ENSMUSP00000022921"/>
<dbReference type="GlyCosmos" id="O08538">
    <property type="glycosylation" value="5 sites, No reported glycans"/>
</dbReference>
<dbReference type="GlyGen" id="O08538">
    <property type="glycosylation" value="5 sites, 2 N-linked glycans (2 sites)"/>
</dbReference>
<dbReference type="iPTMnet" id="O08538"/>
<dbReference type="PhosphoSitePlus" id="O08538"/>
<dbReference type="PaxDb" id="10090-ENSMUSP00000022921"/>
<dbReference type="ProteomicsDB" id="296037"/>
<dbReference type="Antibodypedia" id="4501">
    <property type="antibodies" value="699 antibodies from 39 providers"/>
</dbReference>
<dbReference type="DNASU" id="11600"/>
<dbReference type="Ensembl" id="ENSMUST00000022921.7">
    <property type="protein sequence ID" value="ENSMUSP00000022921.6"/>
    <property type="gene ID" value="ENSMUSG00000022309.10"/>
</dbReference>
<dbReference type="GeneID" id="11600"/>
<dbReference type="KEGG" id="mmu:11600"/>
<dbReference type="UCSC" id="uc007vpc.2">
    <property type="organism name" value="mouse"/>
</dbReference>
<dbReference type="AGR" id="MGI:108448"/>
<dbReference type="CTD" id="284"/>
<dbReference type="MGI" id="MGI:108448">
    <property type="gene designation" value="Angpt1"/>
</dbReference>
<dbReference type="VEuPathDB" id="HostDB:ENSMUSG00000022309"/>
<dbReference type="eggNOG" id="KOG2579">
    <property type="taxonomic scope" value="Eukaryota"/>
</dbReference>
<dbReference type="GeneTree" id="ENSGT00940000158117"/>
<dbReference type="HOGENOM" id="CLU_038628_3_1_1"/>
<dbReference type="InParanoid" id="O08538"/>
<dbReference type="OMA" id="QYNANAL"/>
<dbReference type="OrthoDB" id="7735366at2759"/>
<dbReference type="PhylomeDB" id="O08538"/>
<dbReference type="TreeFam" id="TF336658"/>
<dbReference type="Reactome" id="R-MMU-210993">
    <property type="pathway name" value="Tie2 Signaling"/>
</dbReference>
<dbReference type="Reactome" id="R-MMU-5673001">
    <property type="pathway name" value="RAF/MAP kinase cascade"/>
</dbReference>
<dbReference type="BioGRID-ORCS" id="11600">
    <property type="hits" value="2 hits in 76 CRISPR screens"/>
</dbReference>
<dbReference type="ChiTaRS" id="Angpt1">
    <property type="organism name" value="mouse"/>
</dbReference>
<dbReference type="PRO" id="PR:O08538"/>
<dbReference type="Proteomes" id="UP000000589">
    <property type="component" value="Chromosome 15"/>
</dbReference>
<dbReference type="RNAct" id="O08538">
    <property type="molecule type" value="protein"/>
</dbReference>
<dbReference type="Bgee" id="ENSMUSG00000022309">
    <property type="expression patterns" value="Expressed in cardiac atrium and 165 other cell types or tissues"/>
</dbReference>
<dbReference type="GO" id="GO:0005615">
    <property type="term" value="C:extracellular space"/>
    <property type="evidence" value="ECO:0007669"/>
    <property type="project" value="Ensembl"/>
</dbReference>
<dbReference type="GO" id="GO:0045121">
    <property type="term" value="C:membrane raft"/>
    <property type="evidence" value="ECO:0007669"/>
    <property type="project" value="Ensembl"/>
</dbReference>
<dbReference type="GO" id="GO:0005902">
    <property type="term" value="C:microvillus"/>
    <property type="evidence" value="ECO:0007669"/>
    <property type="project" value="Ensembl"/>
</dbReference>
<dbReference type="GO" id="GO:0005886">
    <property type="term" value="C:plasma membrane"/>
    <property type="evidence" value="ECO:0007669"/>
    <property type="project" value="Ensembl"/>
</dbReference>
<dbReference type="GO" id="GO:0042802">
    <property type="term" value="F:identical protein binding"/>
    <property type="evidence" value="ECO:0007669"/>
    <property type="project" value="Ensembl"/>
</dbReference>
<dbReference type="GO" id="GO:0048018">
    <property type="term" value="F:receptor ligand activity"/>
    <property type="evidence" value="ECO:0007669"/>
    <property type="project" value="Ensembl"/>
</dbReference>
<dbReference type="GO" id="GO:0030971">
    <property type="term" value="F:receptor tyrosine kinase binding"/>
    <property type="evidence" value="ECO:0007669"/>
    <property type="project" value="Ensembl"/>
</dbReference>
<dbReference type="GO" id="GO:0005102">
    <property type="term" value="F:signaling receptor binding"/>
    <property type="evidence" value="ECO:0000353"/>
    <property type="project" value="MGI"/>
</dbReference>
<dbReference type="GO" id="GO:0005172">
    <property type="term" value="F:vascular endothelial growth factor receptor binding"/>
    <property type="evidence" value="ECO:0000304"/>
    <property type="project" value="MGI"/>
</dbReference>
<dbReference type="GO" id="GO:0001525">
    <property type="term" value="P:angiogenesis"/>
    <property type="evidence" value="ECO:0000314"/>
    <property type="project" value="MGI"/>
</dbReference>
<dbReference type="GO" id="GO:0007596">
    <property type="term" value="P:blood coagulation"/>
    <property type="evidence" value="ECO:0007669"/>
    <property type="project" value="InterPro"/>
</dbReference>
<dbReference type="GO" id="GO:0001569">
    <property type="term" value="P:branching involved in blood vessel morphogenesis"/>
    <property type="evidence" value="ECO:0000304"/>
    <property type="project" value="DFLAT"/>
</dbReference>
<dbReference type="GO" id="GO:0055008">
    <property type="term" value="P:cardiac muscle tissue morphogenesis"/>
    <property type="evidence" value="ECO:0000304"/>
    <property type="project" value="DFLAT"/>
</dbReference>
<dbReference type="GO" id="GO:0007169">
    <property type="term" value="P:cell surface receptor protein tyrosine kinase signaling pathway"/>
    <property type="evidence" value="ECO:0000314"/>
    <property type="project" value="MGI"/>
</dbReference>
<dbReference type="GO" id="GO:0031589">
    <property type="term" value="P:cell-substrate adhesion"/>
    <property type="evidence" value="ECO:0000314"/>
    <property type="project" value="MGI"/>
</dbReference>
<dbReference type="GO" id="GO:0003160">
    <property type="term" value="P:endocardium morphogenesis"/>
    <property type="evidence" value="ECO:0000304"/>
    <property type="project" value="DFLAT"/>
</dbReference>
<dbReference type="GO" id="GO:0007492">
    <property type="term" value="P:endoderm development"/>
    <property type="evidence" value="ECO:0000304"/>
    <property type="project" value="MGI"/>
</dbReference>
<dbReference type="GO" id="GO:0072012">
    <property type="term" value="P:glomerulus vasculature development"/>
    <property type="evidence" value="ECO:0000314"/>
    <property type="project" value="MGI"/>
</dbReference>
<dbReference type="GO" id="GO:0030097">
    <property type="term" value="P:hemopoiesis"/>
    <property type="evidence" value="ECO:0000314"/>
    <property type="project" value="MGI"/>
</dbReference>
<dbReference type="GO" id="GO:0030210">
    <property type="term" value="P:heparin proteoglycan biosynthetic process"/>
    <property type="evidence" value="ECO:0007669"/>
    <property type="project" value="Ensembl"/>
</dbReference>
<dbReference type="GO" id="GO:0001701">
    <property type="term" value="P:in utero embryonic development"/>
    <property type="evidence" value="ECO:0000315"/>
    <property type="project" value="MGI"/>
</dbReference>
<dbReference type="GO" id="GO:0007162">
    <property type="term" value="P:negative regulation of cell adhesion"/>
    <property type="evidence" value="ECO:0007669"/>
    <property type="project" value="Ensembl"/>
</dbReference>
<dbReference type="GO" id="GO:0002719">
    <property type="term" value="P:negative regulation of cytokine production involved in immune response"/>
    <property type="evidence" value="ECO:0000314"/>
    <property type="project" value="MGI"/>
</dbReference>
<dbReference type="GO" id="GO:2000352">
    <property type="term" value="P:negative regulation of endothelial cell apoptotic process"/>
    <property type="evidence" value="ECO:0007669"/>
    <property type="project" value="Ensembl"/>
</dbReference>
<dbReference type="GO" id="GO:0043524">
    <property type="term" value="P:negative regulation of neuron apoptotic process"/>
    <property type="evidence" value="ECO:0000314"/>
    <property type="project" value="MGI"/>
</dbReference>
<dbReference type="GO" id="GO:0042308">
    <property type="term" value="P:negative regulation of protein import into nucleus"/>
    <property type="evidence" value="ECO:0000314"/>
    <property type="project" value="MGI"/>
</dbReference>
<dbReference type="GO" id="GO:1900747">
    <property type="term" value="P:negative regulation of vascular endothelial growth factor signaling pathway"/>
    <property type="evidence" value="ECO:0007669"/>
    <property type="project" value="Ensembl"/>
</dbReference>
<dbReference type="GO" id="GO:0043116">
    <property type="term" value="P:negative regulation of vascular permeability"/>
    <property type="evidence" value="ECO:0000314"/>
    <property type="project" value="MGI"/>
</dbReference>
<dbReference type="GO" id="GO:0051402">
    <property type="term" value="P:neuron apoptotic process"/>
    <property type="evidence" value="ECO:0000314"/>
    <property type="project" value="MGI"/>
</dbReference>
<dbReference type="GO" id="GO:0050918">
    <property type="term" value="P:positive chemotaxis"/>
    <property type="evidence" value="ECO:0007669"/>
    <property type="project" value="Ensembl"/>
</dbReference>
<dbReference type="GO" id="GO:0043536">
    <property type="term" value="P:positive regulation of blood vessel endothelial cell migration"/>
    <property type="evidence" value="ECO:0007669"/>
    <property type="project" value="Ensembl"/>
</dbReference>
<dbReference type="GO" id="GO:1905605">
    <property type="term" value="P:positive regulation of blood-brain barrier permeability"/>
    <property type="evidence" value="ECO:0007669"/>
    <property type="project" value="Ensembl"/>
</dbReference>
<dbReference type="GO" id="GO:0045785">
    <property type="term" value="P:positive regulation of cell adhesion"/>
    <property type="evidence" value="ECO:0000314"/>
    <property type="project" value="MGI"/>
</dbReference>
<dbReference type="GO" id="GO:0050820">
    <property type="term" value="P:positive regulation of coagulation"/>
    <property type="evidence" value="ECO:0007669"/>
    <property type="project" value="Ensembl"/>
</dbReference>
<dbReference type="GO" id="GO:0010595">
    <property type="term" value="P:positive regulation of endothelial cell migration"/>
    <property type="evidence" value="ECO:0000304"/>
    <property type="project" value="DFLAT"/>
</dbReference>
<dbReference type="GO" id="GO:0070374">
    <property type="term" value="P:positive regulation of ERK1 and ERK2 cascade"/>
    <property type="evidence" value="ECO:0007669"/>
    <property type="project" value="Ensembl"/>
</dbReference>
<dbReference type="GO" id="GO:0010628">
    <property type="term" value="P:positive regulation of gene expression"/>
    <property type="evidence" value="ECO:0007669"/>
    <property type="project" value="Ensembl"/>
</dbReference>
<dbReference type="GO" id="GO:0051897">
    <property type="term" value="P:positive regulation of phosphatidylinositol 3-kinase/protein kinase B signal transduction"/>
    <property type="evidence" value="ECO:0000314"/>
    <property type="project" value="MGI"/>
</dbReference>
<dbReference type="GO" id="GO:0031398">
    <property type="term" value="P:positive regulation of protein ubiquitination"/>
    <property type="evidence" value="ECO:0007669"/>
    <property type="project" value="Ensembl"/>
</dbReference>
<dbReference type="GO" id="GO:0002092">
    <property type="term" value="P:positive regulation of receptor internalization"/>
    <property type="evidence" value="ECO:0007669"/>
    <property type="project" value="Ensembl"/>
</dbReference>
<dbReference type="GO" id="GO:0030949">
    <property type="term" value="P:positive regulation of vascular endothelial growth factor receptor signaling pathway"/>
    <property type="evidence" value="ECO:0000304"/>
    <property type="project" value="DFLAT"/>
</dbReference>
<dbReference type="GO" id="GO:0034394">
    <property type="term" value="P:protein localization to cell surface"/>
    <property type="evidence" value="ECO:0007669"/>
    <property type="project" value="Ensembl"/>
</dbReference>
<dbReference type="GO" id="GO:0043122">
    <property type="term" value="P:regulation of canonical NF-kappaB signal transduction"/>
    <property type="evidence" value="ECO:0000316"/>
    <property type="project" value="MGI"/>
</dbReference>
<dbReference type="GO" id="GO:2000446">
    <property type="term" value="P:regulation of macrophage migration inhibitory factor signaling pathway"/>
    <property type="evidence" value="ECO:0000314"/>
    <property type="project" value="MGI"/>
</dbReference>
<dbReference type="GO" id="GO:0014842">
    <property type="term" value="P:regulation of skeletal muscle satellite cell proliferation"/>
    <property type="evidence" value="ECO:0007669"/>
    <property type="project" value="Ensembl"/>
</dbReference>
<dbReference type="GO" id="GO:0032680">
    <property type="term" value="P:regulation of tumor necrosis factor production"/>
    <property type="evidence" value="ECO:0000314"/>
    <property type="project" value="MGI"/>
</dbReference>
<dbReference type="GO" id="GO:0002040">
    <property type="term" value="P:sprouting angiogenesis"/>
    <property type="evidence" value="ECO:0007669"/>
    <property type="project" value="Ensembl"/>
</dbReference>
<dbReference type="GO" id="GO:0048014">
    <property type="term" value="P:Tie signaling pathway"/>
    <property type="evidence" value="ECO:0000304"/>
    <property type="project" value="DFLAT"/>
</dbReference>
<dbReference type="GO" id="GO:0001570">
    <property type="term" value="P:vasculogenesis"/>
    <property type="evidence" value="ECO:0000304"/>
    <property type="project" value="DFLAT"/>
</dbReference>
<dbReference type="GO" id="GO:0060979">
    <property type="term" value="P:vasculogenesis involved in coronary vascular morphogenesis"/>
    <property type="evidence" value="ECO:0000304"/>
    <property type="project" value="DFLAT"/>
</dbReference>
<dbReference type="CDD" id="cd00087">
    <property type="entry name" value="FReD"/>
    <property type="match status" value="1"/>
</dbReference>
<dbReference type="FunFam" id="3.90.215.10:FF:000005">
    <property type="entry name" value="angiopoietin-1 isoform X2"/>
    <property type="match status" value="1"/>
</dbReference>
<dbReference type="FunFam" id="4.10.530.10:FF:000001">
    <property type="entry name" value="angiopoietin-2 isoform X1"/>
    <property type="match status" value="1"/>
</dbReference>
<dbReference type="Gene3D" id="3.90.215.10">
    <property type="entry name" value="Gamma Fibrinogen, chain A, domain 1"/>
    <property type="match status" value="1"/>
</dbReference>
<dbReference type="Gene3D" id="4.10.530.10">
    <property type="entry name" value="Gamma-fibrinogen Carboxyl Terminal Fragment, domain 2"/>
    <property type="match status" value="1"/>
</dbReference>
<dbReference type="InterPro" id="IPR037579">
    <property type="entry name" value="FIB_ANG-like"/>
</dbReference>
<dbReference type="InterPro" id="IPR036056">
    <property type="entry name" value="Fibrinogen-like_C"/>
</dbReference>
<dbReference type="InterPro" id="IPR014716">
    <property type="entry name" value="Fibrinogen_a/b/g_C_1"/>
</dbReference>
<dbReference type="InterPro" id="IPR002181">
    <property type="entry name" value="Fibrinogen_a/b/g_C_dom"/>
</dbReference>
<dbReference type="InterPro" id="IPR020837">
    <property type="entry name" value="Fibrinogen_CS"/>
</dbReference>
<dbReference type="NCBIfam" id="NF040941">
    <property type="entry name" value="GGGWT_bact"/>
    <property type="match status" value="1"/>
</dbReference>
<dbReference type="PANTHER" id="PTHR47221">
    <property type="entry name" value="FIBRINOGEN ALPHA CHAIN"/>
    <property type="match status" value="1"/>
</dbReference>
<dbReference type="PANTHER" id="PTHR47221:SF6">
    <property type="entry name" value="FIBRINOGEN ALPHA CHAIN"/>
    <property type="match status" value="1"/>
</dbReference>
<dbReference type="Pfam" id="PF25443">
    <property type="entry name" value="ANG-1"/>
    <property type="match status" value="1"/>
</dbReference>
<dbReference type="Pfam" id="PF00147">
    <property type="entry name" value="Fibrinogen_C"/>
    <property type="match status" value="1"/>
</dbReference>
<dbReference type="SMART" id="SM00186">
    <property type="entry name" value="FBG"/>
    <property type="match status" value="1"/>
</dbReference>
<dbReference type="SUPFAM" id="SSF56496">
    <property type="entry name" value="Fibrinogen C-terminal domain-like"/>
    <property type="match status" value="1"/>
</dbReference>
<dbReference type="PROSITE" id="PS00514">
    <property type="entry name" value="FIBRINOGEN_C_1"/>
    <property type="match status" value="1"/>
</dbReference>
<dbReference type="PROSITE" id="PS51406">
    <property type="entry name" value="FIBRINOGEN_C_2"/>
    <property type="match status" value="1"/>
</dbReference>
<evidence type="ECO:0000250" key="1"/>
<evidence type="ECO:0000250" key="2">
    <source>
        <dbReference type="UniProtKB" id="Q15389"/>
    </source>
</evidence>
<evidence type="ECO:0000255" key="3"/>
<evidence type="ECO:0000255" key="4">
    <source>
        <dbReference type="PROSITE-ProRule" id="PRU00739"/>
    </source>
</evidence>
<evidence type="ECO:0000269" key="5">
    <source>
    </source>
</evidence>
<evidence type="ECO:0000269" key="6">
    <source>
    </source>
</evidence>
<evidence type="ECO:0000269" key="7">
    <source>
    </source>
</evidence>
<evidence type="ECO:0000305" key="8"/>
<gene>
    <name type="primary">Angpt1</name>
    <name type="synonym">Agpt</name>
</gene>
<accession>O08538</accession>
<accession>Q6NWV7</accession>
<feature type="signal peptide" evidence="3">
    <location>
        <begin position="1"/>
        <end position="19"/>
    </location>
</feature>
<feature type="chain" id="PRO_0000009111" description="Angiopoietin-1">
    <location>
        <begin position="20"/>
        <end position="498"/>
    </location>
</feature>
<feature type="domain" description="Fibrinogen C-terminal" evidence="4">
    <location>
        <begin position="277"/>
        <end position="497"/>
    </location>
</feature>
<feature type="coiled-coil region" evidence="3">
    <location>
        <begin position="81"/>
        <end position="119"/>
    </location>
</feature>
<feature type="coiled-coil region" evidence="3">
    <location>
        <begin position="153"/>
        <end position="261"/>
    </location>
</feature>
<feature type="glycosylation site" description="N-linked (GlcNAc...) asparagine" evidence="3">
    <location>
        <position position="92"/>
    </location>
</feature>
<feature type="glycosylation site" description="N-linked (GlcNAc...) asparagine" evidence="3">
    <location>
        <position position="122"/>
    </location>
</feature>
<feature type="glycosylation site" description="N-linked (GlcNAc...) asparagine" evidence="3">
    <location>
        <position position="154"/>
    </location>
</feature>
<feature type="glycosylation site" description="N-linked (GlcNAc...) asparagine" evidence="3">
    <location>
        <position position="243"/>
    </location>
</feature>
<feature type="glycosylation site" description="N-linked (GlcNAc...) asparagine" evidence="3">
    <location>
        <position position="295"/>
    </location>
</feature>
<feature type="disulfide bond" evidence="4">
    <location>
        <begin position="286"/>
        <end position="315"/>
    </location>
</feature>
<feature type="disulfide bond" evidence="4">
    <location>
        <begin position="439"/>
        <end position="452"/>
    </location>
</feature>
<feature type="sequence conflict" description="In Ref. 1; AAB50558." evidence="8" ref="1">
    <original>I</original>
    <variation>V</variation>
    <location>
        <position position="262"/>
    </location>
</feature>
<protein>
    <recommendedName>
        <fullName>Angiopoietin-1</fullName>
        <shortName>ANG-1</shortName>
    </recommendedName>
</protein>
<organism>
    <name type="scientific">Mus musculus</name>
    <name type="common">Mouse</name>
    <dbReference type="NCBI Taxonomy" id="10090"/>
    <lineage>
        <taxon>Eukaryota</taxon>
        <taxon>Metazoa</taxon>
        <taxon>Chordata</taxon>
        <taxon>Craniata</taxon>
        <taxon>Vertebrata</taxon>
        <taxon>Euteleostomi</taxon>
        <taxon>Mammalia</taxon>
        <taxon>Eutheria</taxon>
        <taxon>Euarchontoglires</taxon>
        <taxon>Glires</taxon>
        <taxon>Rodentia</taxon>
        <taxon>Myomorpha</taxon>
        <taxon>Muroidea</taxon>
        <taxon>Muridae</taxon>
        <taxon>Murinae</taxon>
        <taxon>Mus</taxon>
        <taxon>Mus</taxon>
    </lineage>
</organism>
<keyword id="KW-0037">Angiogenesis</keyword>
<keyword id="KW-0175">Coiled coil</keyword>
<keyword id="KW-0217">Developmental protein</keyword>
<keyword id="KW-0221">Differentiation</keyword>
<keyword id="KW-1015">Disulfide bond</keyword>
<keyword id="KW-0325">Glycoprotein</keyword>
<keyword id="KW-1185">Reference proteome</keyword>
<keyword id="KW-0964">Secreted</keyword>
<keyword id="KW-0732">Signal</keyword>